<proteinExistence type="evidence at protein level"/>
<gene>
    <name type="primary">TPS02</name>
</gene>
<evidence type="ECO:0000250" key="1">
    <source>
        <dbReference type="UniProtKB" id="A0A1C9J6A7"/>
    </source>
</evidence>
<evidence type="ECO:0000250" key="2">
    <source>
        <dbReference type="UniProtKB" id="Q40577"/>
    </source>
</evidence>
<evidence type="ECO:0000255" key="3"/>
<evidence type="ECO:0000269" key="4">
    <source>
    </source>
</evidence>
<evidence type="ECO:0000269" key="5">
    <source>
    </source>
</evidence>
<evidence type="ECO:0000305" key="6"/>
<dbReference type="EC" id="4.2.3.-"/>
<dbReference type="EC" id="4.2.3.46" evidence="5"/>
<dbReference type="SMR" id="P0CJ43"/>
<dbReference type="PaxDb" id="3702-AT4G16730.1"/>
<dbReference type="eggNOG" id="ENOG502QUH3">
    <property type="taxonomic scope" value="Eukaryota"/>
</dbReference>
<dbReference type="HOGENOM" id="CLU_003125_7_1_1"/>
<dbReference type="PhylomeDB" id="P0CJ43"/>
<dbReference type="BRENDA" id="4.2.3.46">
    <property type="organism ID" value="399"/>
</dbReference>
<dbReference type="UniPathway" id="UPA00213"/>
<dbReference type="ExpressionAtlas" id="P0CJ43">
    <property type="expression patterns" value="baseline and differential"/>
</dbReference>
<dbReference type="GO" id="GO:0009507">
    <property type="term" value="C:chloroplast"/>
    <property type="evidence" value="ECO:0007669"/>
    <property type="project" value="UniProtKB-SubCell"/>
</dbReference>
<dbReference type="GO" id="GO:0052578">
    <property type="term" value="F:alpha-farnesene synthase activity"/>
    <property type="evidence" value="ECO:0007669"/>
    <property type="project" value="RHEA"/>
</dbReference>
<dbReference type="GO" id="GO:0000287">
    <property type="term" value="F:magnesium ion binding"/>
    <property type="evidence" value="ECO:0007669"/>
    <property type="project" value="InterPro"/>
</dbReference>
<dbReference type="GO" id="GO:0016102">
    <property type="term" value="P:diterpenoid biosynthetic process"/>
    <property type="evidence" value="ECO:0007669"/>
    <property type="project" value="InterPro"/>
</dbReference>
<dbReference type="CDD" id="cd00684">
    <property type="entry name" value="Terpene_cyclase_plant_C1"/>
    <property type="match status" value="1"/>
</dbReference>
<dbReference type="FunFam" id="1.10.600.10:FF:000007">
    <property type="entry name" value="Isoprene synthase, chloroplastic"/>
    <property type="match status" value="1"/>
</dbReference>
<dbReference type="FunFam" id="1.50.10.130:FF:000001">
    <property type="entry name" value="Isoprene synthase, chloroplastic"/>
    <property type="match status" value="1"/>
</dbReference>
<dbReference type="Gene3D" id="1.10.600.10">
    <property type="entry name" value="Farnesyl Diphosphate Synthase"/>
    <property type="match status" value="1"/>
</dbReference>
<dbReference type="Gene3D" id="1.50.10.130">
    <property type="entry name" value="Terpene synthase, N-terminal domain"/>
    <property type="match status" value="1"/>
</dbReference>
<dbReference type="InterPro" id="IPR008949">
    <property type="entry name" value="Isoprenoid_synthase_dom_sf"/>
</dbReference>
<dbReference type="InterPro" id="IPR034741">
    <property type="entry name" value="Terpene_cyclase-like_1_C"/>
</dbReference>
<dbReference type="InterPro" id="IPR044814">
    <property type="entry name" value="Terpene_cyclase_plant_C1"/>
</dbReference>
<dbReference type="InterPro" id="IPR001906">
    <property type="entry name" value="Terpene_synth_N"/>
</dbReference>
<dbReference type="InterPro" id="IPR036965">
    <property type="entry name" value="Terpene_synth_N_sf"/>
</dbReference>
<dbReference type="InterPro" id="IPR050148">
    <property type="entry name" value="Terpene_synthase-like"/>
</dbReference>
<dbReference type="InterPro" id="IPR005630">
    <property type="entry name" value="Terpene_synthase_metal-bd"/>
</dbReference>
<dbReference type="InterPro" id="IPR008930">
    <property type="entry name" value="Terpenoid_cyclase/PrenylTrfase"/>
</dbReference>
<dbReference type="PANTHER" id="PTHR31225:SF129">
    <property type="entry name" value="(RAPE) HYPOTHETICAL PROTEIN"/>
    <property type="match status" value="1"/>
</dbReference>
<dbReference type="PANTHER" id="PTHR31225">
    <property type="entry name" value="OS04G0344100 PROTEIN-RELATED"/>
    <property type="match status" value="1"/>
</dbReference>
<dbReference type="Pfam" id="PF01397">
    <property type="entry name" value="Terpene_synth"/>
    <property type="match status" value="1"/>
</dbReference>
<dbReference type="Pfam" id="PF03936">
    <property type="entry name" value="Terpene_synth_C"/>
    <property type="match status" value="1"/>
</dbReference>
<dbReference type="SFLD" id="SFLDS00005">
    <property type="entry name" value="Isoprenoid_Synthase_Type_I"/>
    <property type="match status" value="1"/>
</dbReference>
<dbReference type="SFLD" id="SFLDG01019">
    <property type="entry name" value="Terpene_Cyclase_Like_1_C_Termi"/>
    <property type="match status" value="1"/>
</dbReference>
<dbReference type="SUPFAM" id="SSF48239">
    <property type="entry name" value="Terpenoid cyclases/Protein prenyltransferases"/>
    <property type="match status" value="1"/>
</dbReference>
<dbReference type="SUPFAM" id="SSF48576">
    <property type="entry name" value="Terpenoid synthases"/>
    <property type="match status" value="1"/>
</dbReference>
<name>OCISB_ARATH</name>
<accession>P0CJ43</accession>
<accession>O23516</accession>
<comment type="function">
    <text evidence="5">Predominantly involved in monoterpene (C10) biosynthesis. Using GPP as substrate, the major product is (E)-beta-ocimene with minor amounts of (Z)-beta-ocimene and myrcene. Using FPP as substrate, could also be able to synthesize in vitro sesquiterpenes (C15) with (E,E)-alpha-farnesene as the major product and with (Z,E)-alpha-farnesene and (E,E)-beta-farnesene as minor products.</text>
</comment>
<comment type="catalytic activity">
    <reaction evidence="5">
        <text>(2E,6E)-farnesyl diphosphate = (3E,6E)-alpha-farnesene + diphosphate</text>
        <dbReference type="Rhea" id="RHEA:27421"/>
        <dbReference type="ChEBI" id="CHEBI:10280"/>
        <dbReference type="ChEBI" id="CHEBI:33019"/>
        <dbReference type="ChEBI" id="CHEBI:175763"/>
        <dbReference type="EC" id="4.2.3.46"/>
    </reaction>
</comment>
<comment type="cofactor">
    <cofactor evidence="1">
        <name>Mg(2+)</name>
        <dbReference type="ChEBI" id="CHEBI:18420"/>
    </cofactor>
    <cofactor evidence="1">
        <name>Mn(2+)</name>
        <dbReference type="ChEBI" id="CHEBI:29035"/>
    </cofactor>
    <text evidence="1">Binds 3 Mg(2+) or Mn(2+) ions per subunit.</text>
</comment>
<comment type="pathway">
    <text>Secondary metabolite biosynthesis; terpenoid biosynthesis.</text>
</comment>
<comment type="subcellular location">
    <subcellularLocation>
        <location evidence="5">Plastid</location>
        <location evidence="5">Chloroplast</location>
    </subcellularLocation>
</comment>
<comment type="tissue specificity">
    <text evidence="4">Expressed exclusively in flowers.</text>
</comment>
<comment type="induction">
    <text evidence="5">By coronalon. Also induced in response to the caterpillar P.xylostella feeding.</text>
</comment>
<comment type="domain">
    <text evidence="2">The Asp-Asp-Xaa-Xaa-Asp/Glu (DDXXD/E) motif is important for the catalytic activity, presumably through binding to Mg(2+).</text>
</comment>
<comment type="disruption phenotype">
    <text evidence="5">No formation of (E)-beta-ocimene detected.</text>
</comment>
<comment type="similarity">
    <text evidence="6">Belongs to the terpene synthase family. Tpsb subfamily.</text>
</comment>
<comment type="caution">
    <text evidence="6">Has been shown to be a pseudogene in cv. Columbia (AC P0CJ42) due to a naturally occurring frameshift at position 65 in this strain. The sequence shown is from strain cv. Wassilewskija.</text>
</comment>
<organism>
    <name type="scientific">Arabidopsis thaliana</name>
    <name type="common">Mouse-ear cress</name>
    <dbReference type="NCBI Taxonomy" id="3702"/>
    <lineage>
        <taxon>Eukaryota</taxon>
        <taxon>Viridiplantae</taxon>
        <taxon>Streptophyta</taxon>
        <taxon>Embryophyta</taxon>
        <taxon>Tracheophyta</taxon>
        <taxon>Spermatophyta</taxon>
        <taxon>Magnoliopsida</taxon>
        <taxon>eudicotyledons</taxon>
        <taxon>Gunneridae</taxon>
        <taxon>Pentapetalae</taxon>
        <taxon>rosids</taxon>
        <taxon>malvids</taxon>
        <taxon>Brassicales</taxon>
        <taxon>Brassicaceae</taxon>
        <taxon>Camelineae</taxon>
        <taxon>Arabidopsis</taxon>
    </lineage>
</organism>
<sequence length="589" mass="69047">MAAHNLCFNSAFVCNVHHQKTQHFPCNAVSKTTSTHAVTFHRRSANYRPPLWDHQYLLSLENIYVKEVETAEKAILFKEEVRKTLNEIEGSIEQLEMIDSLQRLGISYHYKHEIHDILRKIHDQHGEIERETQDLHATSLEFILLRQHGFDVSQDAFDVFISETGEFRKTLHSDIKGLLSLYEASYFSMDSEFKLKETRIYANKRLSEFVAESSKTICREDETYILEMVKRALETPYHWSIRRLEARWYINVYEKKHEMNPLLLEFAAIDFNMLQANHQEELKLISSWWNSTGLMKQLDFVRDRITESYFWTIGIFYEPEFKYCRKILTKIFMLIVIMDDIYDIYGTLEELELFTNVVEKWDVNHVERLPNYMRMCFLFLYNEINQIGYDVLRDKGLNVIPYLKQVWTDLFKTFLTESKWYKTGHKPSFEEYMQNGVISSSVPTILLHLFSVLSDHISDQTLTDDSKNHSVVRSCATILRLANDLATSTEEMARGDSPKSVQCYMYETRASEEEARRHMQSMISDSWDIINSDLKTAHTSSLPRGFLAAAANLNRVVQCIYRHGDGHGSPEKTKTVDYIQSVLFNPVPL</sequence>
<reference key="1">
    <citation type="journal article" date="2002" name="Mol. Genet. Genomics">
        <title>Genomic analysis of the terpenoid synthase (AtTPS) gene family of Arabidopsis thaliana.</title>
        <authorList>
            <person name="Aubourg S."/>
            <person name="Lecharny A."/>
            <person name="Bohlmann J."/>
        </authorList>
    </citation>
    <scope>GENE FAMILY</scope>
    <scope>NOMENCLATURE</scope>
</reference>
<reference key="2">
    <citation type="journal article" date="2003" name="Plant Cell">
        <title>Biosynthesis and emission of terpenoid volatiles from Arabidopsis flowers.</title>
        <authorList>
            <person name="Chen F."/>
            <person name="Tholl D."/>
            <person name="D'Auria J.C."/>
            <person name="Farooq A."/>
            <person name="Pichersky E."/>
            <person name="Gershenzon J."/>
        </authorList>
    </citation>
    <scope>TISSUE SPECIFICITY</scope>
</reference>
<reference key="3">
    <citation type="journal article" date="2003" name="Plant Mol. Biol.">
        <title>Genome organization in Arabidopsis thaliana: a survey for genes involved in isoprenoid and chlorophyll metabolism.</title>
        <authorList>
            <person name="Lange B.M."/>
            <person name="Ghassemian M."/>
        </authorList>
    </citation>
    <scope>GENE FAMILY</scope>
</reference>
<reference key="4">
    <citation type="journal article" date="2010" name="Plant Physiol.">
        <title>Variation of herbivore-induced volatile terpenes among Arabidopsis ecotypes depends on allelic differences and subcellular targeting of two terpene synthases, TPS02 and TPS03.</title>
        <authorList>
            <person name="Huang M."/>
            <person name="Abel C."/>
            <person name="Sohrabi R."/>
            <person name="Petri J."/>
            <person name="Haupt I."/>
            <person name="Cosimano J."/>
            <person name="Gershenzon J."/>
            <person name="Tholl D."/>
        </authorList>
    </citation>
    <scope>FUNCTION</scope>
    <scope>CATALYTIC ACTIVITY</scope>
    <scope>INDUCTION</scope>
    <scope>DISRUPTION PHENOTYPE</scope>
    <scope>SUBCELLULAR LOCATION</scope>
    <source>
        <strain>cv. Columbia</strain>
        <strain>cv. Wassilewskija</strain>
    </source>
</reference>
<keyword id="KW-0150">Chloroplast</keyword>
<keyword id="KW-0456">Lyase</keyword>
<keyword id="KW-0460">Magnesium</keyword>
<keyword id="KW-0464">Manganese</keyword>
<keyword id="KW-0479">Metal-binding</keyword>
<keyword id="KW-0934">Plastid</keyword>
<keyword id="KW-0809">Transit peptide</keyword>
<protein>
    <recommendedName>
        <fullName>(E)-beta-ocimene synthase, chloroplastic</fullName>
        <ecNumber>4.2.3.-</ecNumber>
    </recommendedName>
    <alternativeName>
        <fullName>(E,E)-alpha-farnesene synthase</fullName>
        <ecNumber evidence="5">4.2.3.46</ecNumber>
    </alternativeName>
    <alternativeName>
        <fullName>Terpenoid synthase 2</fullName>
        <shortName>AtTPS02</shortName>
    </alternativeName>
</protein>
<feature type="transit peptide" description="Chloroplast" evidence="3">
    <location>
        <begin position="1"/>
        <end position="25"/>
    </location>
</feature>
<feature type="chain" id="PRO_0000403699" description="(E)-beta-ocimene synthase, chloroplastic">
    <location>
        <begin position="26"/>
        <end position="589"/>
    </location>
</feature>
<feature type="short sequence motif" description="DDXXD motif" evidence="2">
    <location>
        <begin position="339"/>
        <end position="343"/>
    </location>
</feature>
<feature type="binding site" evidence="2">
    <location>
        <position position="302"/>
    </location>
    <ligand>
        <name>(2E,6E)-farnesyl diphosphate</name>
        <dbReference type="ChEBI" id="CHEBI:175763"/>
    </ligand>
</feature>
<feature type="binding site" evidence="2">
    <location>
        <position position="339"/>
    </location>
    <ligand>
        <name>(2E,6E)-farnesyl diphosphate</name>
        <dbReference type="ChEBI" id="CHEBI:175763"/>
    </ligand>
</feature>
<feature type="binding site" evidence="2">
    <location>
        <position position="339"/>
    </location>
    <ligand>
        <name>Mg(2+)</name>
        <dbReference type="ChEBI" id="CHEBI:18420"/>
        <label>1</label>
    </ligand>
</feature>
<feature type="binding site" evidence="2">
    <location>
        <position position="339"/>
    </location>
    <ligand>
        <name>Mg(2+)</name>
        <dbReference type="ChEBI" id="CHEBI:18420"/>
        <label>2</label>
    </ligand>
</feature>
<feature type="binding site" evidence="2">
    <location>
        <position position="343"/>
    </location>
    <ligand>
        <name>(2E,6E)-farnesyl diphosphate</name>
        <dbReference type="ChEBI" id="CHEBI:175763"/>
    </ligand>
</feature>
<feature type="binding site" evidence="2">
    <location>
        <position position="343"/>
    </location>
    <ligand>
        <name>Mg(2+)</name>
        <dbReference type="ChEBI" id="CHEBI:18420"/>
        <label>1</label>
    </ligand>
</feature>
<feature type="binding site" evidence="2">
    <location>
        <position position="343"/>
    </location>
    <ligand>
        <name>Mg(2+)</name>
        <dbReference type="ChEBI" id="CHEBI:18420"/>
        <label>2</label>
    </ligand>
</feature>
<feature type="binding site" evidence="2">
    <location>
        <position position="480"/>
    </location>
    <ligand>
        <name>(2E,6E)-farnesyl diphosphate</name>
        <dbReference type="ChEBI" id="CHEBI:175763"/>
    </ligand>
</feature>
<feature type="binding site" evidence="2">
    <location>
        <position position="483"/>
    </location>
    <ligand>
        <name>(2E,6E)-farnesyl diphosphate</name>
        <dbReference type="ChEBI" id="CHEBI:175763"/>
    </ligand>
</feature>
<feature type="binding site" evidence="2">
    <location>
        <position position="483"/>
    </location>
    <ligand>
        <name>Mg(2+)</name>
        <dbReference type="ChEBI" id="CHEBI:18420"/>
        <label>3</label>
    </ligand>
</feature>
<feature type="binding site" evidence="2">
    <location>
        <position position="487"/>
    </location>
    <ligand>
        <name>Mg(2+)</name>
        <dbReference type="ChEBI" id="CHEBI:18420"/>
        <label>3</label>
    </ligand>
</feature>
<feature type="binding site" evidence="2">
    <location>
        <position position="491"/>
    </location>
    <ligand>
        <name>Mg(2+)</name>
        <dbReference type="ChEBI" id="CHEBI:18420"/>
        <label>3</label>
    </ligand>
</feature>